<name>YDIK_SHIFL</name>
<organism>
    <name type="scientific">Shigella flexneri</name>
    <dbReference type="NCBI Taxonomy" id="623"/>
    <lineage>
        <taxon>Bacteria</taxon>
        <taxon>Pseudomonadati</taxon>
        <taxon>Pseudomonadota</taxon>
        <taxon>Gammaproteobacteria</taxon>
        <taxon>Enterobacterales</taxon>
        <taxon>Enterobacteriaceae</taxon>
        <taxon>Shigella</taxon>
    </lineage>
</organism>
<gene>
    <name type="primary">ydiK</name>
    <name type="ordered locus">SF1718</name>
    <name type="ordered locus">S1850</name>
</gene>
<evidence type="ECO:0000250" key="1">
    <source>
        <dbReference type="UniProtKB" id="P0AFS7"/>
    </source>
</evidence>
<evidence type="ECO:0000255" key="2"/>
<evidence type="ECO:0000305" key="3"/>
<dbReference type="EMBL" id="AE005674">
    <property type="protein sequence ID" value="AAN43294.1"/>
    <property type="molecule type" value="Genomic_DNA"/>
</dbReference>
<dbReference type="EMBL" id="AE014073">
    <property type="protein sequence ID" value="AAP17182.1"/>
    <property type="molecule type" value="Genomic_DNA"/>
</dbReference>
<dbReference type="RefSeq" id="NP_707587.1">
    <property type="nucleotide sequence ID" value="NC_004337.2"/>
</dbReference>
<dbReference type="RefSeq" id="WP_000248636.1">
    <property type="nucleotide sequence ID" value="NZ_WPGW01000073.1"/>
</dbReference>
<dbReference type="SMR" id="P0AFS8"/>
<dbReference type="PaxDb" id="198214-SF1718"/>
<dbReference type="GeneID" id="1024908"/>
<dbReference type="GeneID" id="75204534"/>
<dbReference type="KEGG" id="sfl:SF1718"/>
<dbReference type="KEGG" id="sfx:S1850"/>
<dbReference type="PATRIC" id="fig|198214.7.peg.2032"/>
<dbReference type="HOGENOM" id="CLU_041771_1_1_6"/>
<dbReference type="Proteomes" id="UP000001006">
    <property type="component" value="Chromosome"/>
</dbReference>
<dbReference type="Proteomes" id="UP000002673">
    <property type="component" value="Chromosome"/>
</dbReference>
<dbReference type="GO" id="GO:0005886">
    <property type="term" value="C:plasma membrane"/>
    <property type="evidence" value="ECO:0007669"/>
    <property type="project" value="UniProtKB-SubCell"/>
</dbReference>
<dbReference type="InterPro" id="IPR002549">
    <property type="entry name" value="AI-2E-like"/>
</dbReference>
<dbReference type="NCBIfam" id="NF008216">
    <property type="entry name" value="PRK10983.1"/>
    <property type="match status" value="1"/>
</dbReference>
<dbReference type="PANTHER" id="PTHR21716">
    <property type="entry name" value="TRANSMEMBRANE PROTEIN"/>
    <property type="match status" value="1"/>
</dbReference>
<dbReference type="PANTHER" id="PTHR21716:SF67">
    <property type="entry name" value="TRANSPORT PROTEIN YDIK-RELATED"/>
    <property type="match status" value="1"/>
</dbReference>
<dbReference type="Pfam" id="PF01594">
    <property type="entry name" value="AI-2E_transport"/>
    <property type="match status" value="1"/>
</dbReference>
<feature type="chain" id="PRO_0000148300" description="Putative transport protein YdiK">
    <location>
        <begin position="1"/>
        <end position="370"/>
    </location>
</feature>
<feature type="topological domain" description="Periplasmic" evidence="2">
    <location>
        <begin position="1"/>
        <end position="17"/>
    </location>
</feature>
<feature type="transmembrane region" description="Helical" evidence="2">
    <location>
        <begin position="18"/>
        <end position="38"/>
    </location>
</feature>
<feature type="topological domain" description="Cytoplasmic" evidence="2">
    <location>
        <position position="39"/>
    </location>
</feature>
<feature type="transmembrane region" description="Helical" evidence="2">
    <location>
        <begin position="40"/>
        <end position="60"/>
    </location>
</feature>
<feature type="topological domain" description="Periplasmic" evidence="2">
    <location>
        <begin position="61"/>
        <end position="65"/>
    </location>
</feature>
<feature type="transmembrane region" description="Helical" evidence="2">
    <location>
        <begin position="66"/>
        <end position="86"/>
    </location>
</feature>
<feature type="topological domain" description="Cytoplasmic" evidence="2">
    <location>
        <begin position="87"/>
        <end position="106"/>
    </location>
</feature>
<feature type="transmembrane region" description="Helical" evidence="2">
    <location>
        <begin position="107"/>
        <end position="127"/>
    </location>
</feature>
<feature type="topological domain" description="Periplasmic" evidence="2">
    <location>
        <begin position="128"/>
        <end position="156"/>
    </location>
</feature>
<feature type="transmembrane region" description="Helical" evidence="2">
    <location>
        <begin position="157"/>
        <end position="177"/>
    </location>
</feature>
<feature type="topological domain" description="Cytoplasmic" evidence="2">
    <location>
        <begin position="178"/>
        <end position="213"/>
    </location>
</feature>
<feature type="transmembrane region" description="Helical" evidence="2">
    <location>
        <begin position="214"/>
        <end position="234"/>
    </location>
</feature>
<feature type="topological domain" description="Periplasmic" evidence="2">
    <location>
        <begin position="235"/>
        <end position="248"/>
    </location>
</feature>
<feature type="transmembrane region" description="Helical" evidence="2">
    <location>
        <begin position="249"/>
        <end position="269"/>
    </location>
</feature>
<feature type="topological domain" description="Cytoplasmic" evidence="2">
    <location>
        <begin position="270"/>
        <end position="274"/>
    </location>
</feature>
<feature type="transmembrane region" description="Helical" evidence="2">
    <location>
        <begin position="275"/>
        <end position="295"/>
    </location>
</feature>
<feature type="topological domain" description="Periplasmic" evidence="2">
    <location>
        <begin position="296"/>
        <end position="308"/>
    </location>
</feature>
<feature type="transmembrane region" description="Helical" evidence="2">
    <location>
        <begin position="309"/>
        <end position="329"/>
    </location>
</feature>
<feature type="topological domain" description="Cytoplasmic" evidence="2">
    <location>
        <begin position="330"/>
        <end position="370"/>
    </location>
</feature>
<keyword id="KW-0997">Cell inner membrane</keyword>
<keyword id="KW-1003">Cell membrane</keyword>
<keyword id="KW-0472">Membrane</keyword>
<keyword id="KW-1185">Reference proteome</keyword>
<keyword id="KW-0812">Transmembrane</keyword>
<keyword id="KW-1133">Transmembrane helix</keyword>
<keyword id="KW-0813">Transport</keyword>
<sequence length="370" mass="39841">MVNVRQPRDVAQILLSVLFLAIMIVACLWIVQPFILGFAWAGTVVIATWPVLLRLQKIMFGRRSLAVLVMTLLLVMVFIIPIALLVNSIVDGSGPLIKAISSGDMTLPDLAWLNTIPVIGAKLYAGWHNLLDMGGTAIMAKVRPYIGTTTTWFVGQAAHIGRFMVHCALMLLFSALLYWRGEQVAQGIRHFATRLAGVRGDAAVLLAAQAIRAVALGVVVTALVQAVLGGIGLAVSGVPYATLLTVLMILSCLVQLGPLPVLIPAIIWLYWTGDTTWGTVLLVWSGVVGTLDNVIRPMLIRMGADLPLILILSGVIGGLIAFGMIGLFIGPVLLAVSWRLFAAWVEEVPPPTDQPEEILEELGEIEKPNK</sequence>
<reference key="1">
    <citation type="journal article" date="2002" name="Nucleic Acids Res.">
        <title>Genome sequence of Shigella flexneri 2a: insights into pathogenicity through comparison with genomes of Escherichia coli K12 and O157.</title>
        <authorList>
            <person name="Jin Q."/>
            <person name="Yuan Z."/>
            <person name="Xu J."/>
            <person name="Wang Y."/>
            <person name="Shen Y."/>
            <person name="Lu W."/>
            <person name="Wang J."/>
            <person name="Liu H."/>
            <person name="Yang J."/>
            <person name="Yang F."/>
            <person name="Zhang X."/>
            <person name="Zhang J."/>
            <person name="Yang G."/>
            <person name="Wu H."/>
            <person name="Qu D."/>
            <person name="Dong J."/>
            <person name="Sun L."/>
            <person name="Xue Y."/>
            <person name="Zhao A."/>
            <person name="Gao Y."/>
            <person name="Zhu J."/>
            <person name="Kan B."/>
            <person name="Ding K."/>
            <person name="Chen S."/>
            <person name="Cheng H."/>
            <person name="Yao Z."/>
            <person name="He B."/>
            <person name="Chen R."/>
            <person name="Ma D."/>
            <person name="Qiang B."/>
            <person name="Wen Y."/>
            <person name="Hou Y."/>
            <person name="Yu J."/>
        </authorList>
    </citation>
    <scope>NUCLEOTIDE SEQUENCE [LARGE SCALE GENOMIC DNA]</scope>
    <source>
        <strain>301 / Serotype 2a</strain>
    </source>
</reference>
<reference key="2">
    <citation type="journal article" date="2003" name="Infect. Immun.">
        <title>Complete genome sequence and comparative genomics of Shigella flexneri serotype 2a strain 2457T.</title>
        <authorList>
            <person name="Wei J."/>
            <person name="Goldberg M.B."/>
            <person name="Burland V."/>
            <person name="Venkatesan M.M."/>
            <person name="Deng W."/>
            <person name="Fournier G."/>
            <person name="Mayhew G.F."/>
            <person name="Plunkett G. III"/>
            <person name="Rose D.J."/>
            <person name="Darling A."/>
            <person name="Mau B."/>
            <person name="Perna N.T."/>
            <person name="Payne S.M."/>
            <person name="Runyen-Janecky L.J."/>
            <person name="Zhou S."/>
            <person name="Schwartz D.C."/>
            <person name="Blattner F.R."/>
        </authorList>
    </citation>
    <scope>NUCLEOTIDE SEQUENCE [LARGE SCALE GENOMIC DNA]</scope>
    <source>
        <strain>ATCC 700930 / 2457T / Serotype 2a</strain>
    </source>
</reference>
<proteinExistence type="inferred from homology"/>
<accession>P0AFS8</accession>
<accession>P77175</accession>
<comment type="subcellular location">
    <subcellularLocation>
        <location evidence="1">Cell inner membrane</location>
        <topology evidence="2">Multi-pass membrane protein</topology>
    </subcellularLocation>
</comment>
<comment type="similarity">
    <text evidence="3">Belongs to the autoinducer-2 exporter (AI-2E) (TC 2.A.86) family.</text>
</comment>
<protein>
    <recommendedName>
        <fullName>Putative transport protein YdiK</fullName>
    </recommendedName>
</protein>